<organism>
    <name type="scientific">Kluyveromyces lactis (strain ATCC 8585 / CBS 2359 / DSM 70799 / NBRC 1267 / NRRL Y-1140 / WM37)</name>
    <name type="common">Yeast</name>
    <name type="synonym">Candida sphaerica</name>
    <dbReference type="NCBI Taxonomy" id="284590"/>
    <lineage>
        <taxon>Eukaryota</taxon>
        <taxon>Fungi</taxon>
        <taxon>Dikarya</taxon>
        <taxon>Ascomycota</taxon>
        <taxon>Saccharomycotina</taxon>
        <taxon>Saccharomycetes</taxon>
        <taxon>Saccharomycetales</taxon>
        <taxon>Saccharomycetaceae</taxon>
        <taxon>Kluyveromyces</taxon>
    </lineage>
</organism>
<proteinExistence type="inferred from homology"/>
<keyword id="KW-0010">Activator</keyword>
<keyword id="KW-0156">Chromatin regulator</keyword>
<keyword id="KW-0963">Cytoplasm</keyword>
<keyword id="KW-0206">Cytoskeleton</keyword>
<keyword id="KW-0539">Nucleus</keyword>
<keyword id="KW-1185">Reference proteome</keyword>
<keyword id="KW-0804">Transcription</keyword>
<keyword id="KW-0805">Transcription regulation</keyword>
<reference key="1">
    <citation type="journal article" date="2004" name="Nature">
        <title>Genome evolution in yeasts.</title>
        <authorList>
            <person name="Dujon B."/>
            <person name="Sherman D."/>
            <person name="Fischer G."/>
            <person name="Durrens P."/>
            <person name="Casaregola S."/>
            <person name="Lafontaine I."/>
            <person name="de Montigny J."/>
            <person name="Marck C."/>
            <person name="Neuveglise C."/>
            <person name="Talla E."/>
            <person name="Goffard N."/>
            <person name="Frangeul L."/>
            <person name="Aigle M."/>
            <person name="Anthouard V."/>
            <person name="Babour A."/>
            <person name="Barbe V."/>
            <person name="Barnay S."/>
            <person name="Blanchin S."/>
            <person name="Beckerich J.-M."/>
            <person name="Beyne E."/>
            <person name="Bleykasten C."/>
            <person name="Boisrame A."/>
            <person name="Boyer J."/>
            <person name="Cattolico L."/>
            <person name="Confanioleri F."/>
            <person name="de Daruvar A."/>
            <person name="Despons L."/>
            <person name="Fabre E."/>
            <person name="Fairhead C."/>
            <person name="Ferry-Dumazet H."/>
            <person name="Groppi A."/>
            <person name="Hantraye F."/>
            <person name="Hennequin C."/>
            <person name="Jauniaux N."/>
            <person name="Joyet P."/>
            <person name="Kachouri R."/>
            <person name="Kerrest A."/>
            <person name="Koszul R."/>
            <person name="Lemaire M."/>
            <person name="Lesur I."/>
            <person name="Ma L."/>
            <person name="Muller H."/>
            <person name="Nicaud J.-M."/>
            <person name="Nikolski M."/>
            <person name="Oztas S."/>
            <person name="Ozier-Kalogeropoulos O."/>
            <person name="Pellenz S."/>
            <person name="Potier S."/>
            <person name="Richard G.-F."/>
            <person name="Straub M.-L."/>
            <person name="Suleau A."/>
            <person name="Swennen D."/>
            <person name="Tekaia F."/>
            <person name="Wesolowski-Louvel M."/>
            <person name="Westhof E."/>
            <person name="Wirth B."/>
            <person name="Zeniou-Meyer M."/>
            <person name="Zivanovic Y."/>
            <person name="Bolotin-Fukuhara M."/>
            <person name="Thierry A."/>
            <person name="Bouchier C."/>
            <person name="Caudron B."/>
            <person name="Scarpelli C."/>
            <person name="Gaillardin C."/>
            <person name="Weissenbach J."/>
            <person name="Wincker P."/>
            <person name="Souciet J.-L."/>
        </authorList>
    </citation>
    <scope>NUCLEOTIDE SEQUENCE [LARGE SCALE GENOMIC DNA]</scope>
    <source>
        <strain>ATCC 8585 / CBS 2359 / DSM 70799 / NBRC 1267 / NRRL Y-1140 / WM37</strain>
    </source>
</reference>
<protein>
    <recommendedName>
        <fullName>Actin-like protein ARP6</fullName>
    </recommendedName>
</protein>
<dbReference type="EMBL" id="CR382126">
    <property type="protein sequence ID" value="CAG98643.1"/>
    <property type="molecule type" value="Genomic_DNA"/>
</dbReference>
<dbReference type="RefSeq" id="XP_455935.1">
    <property type="nucleotide sequence ID" value="XM_455935.1"/>
</dbReference>
<dbReference type="SMR" id="Q6CJF4"/>
<dbReference type="FunCoup" id="Q6CJF4">
    <property type="interactions" value="375"/>
</dbReference>
<dbReference type="STRING" id="284590.Q6CJF4"/>
<dbReference type="PaxDb" id="284590-Q6CJF4"/>
<dbReference type="KEGG" id="kla:KLLA0_F19063g"/>
<dbReference type="eggNOG" id="KOG0680">
    <property type="taxonomic scope" value="Eukaryota"/>
</dbReference>
<dbReference type="HOGENOM" id="CLU_027965_1_1_1"/>
<dbReference type="InParanoid" id="Q6CJF4"/>
<dbReference type="OMA" id="FFEEYEC"/>
<dbReference type="Proteomes" id="UP000000598">
    <property type="component" value="Chromosome F"/>
</dbReference>
<dbReference type="GO" id="GO:0005737">
    <property type="term" value="C:cytoplasm"/>
    <property type="evidence" value="ECO:0007669"/>
    <property type="project" value="UniProtKB-SubCell"/>
</dbReference>
<dbReference type="GO" id="GO:0005856">
    <property type="term" value="C:cytoskeleton"/>
    <property type="evidence" value="ECO:0007669"/>
    <property type="project" value="UniProtKB-SubCell"/>
</dbReference>
<dbReference type="GO" id="GO:0005634">
    <property type="term" value="C:nucleus"/>
    <property type="evidence" value="ECO:0007669"/>
    <property type="project" value="UniProtKB-SubCell"/>
</dbReference>
<dbReference type="GO" id="GO:0006325">
    <property type="term" value="P:chromatin organization"/>
    <property type="evidence" value="ECO:0007669"/>
    <property type="project" value="UniProtKB-KW"/>
</dbReference>
<dbReference type="CDD" id="cd10210">
    <property type="entry name" value="ASKHA_NBD_Arp6"/>
    <property type="match status" value="1"/>
</dbReference>
<dbReference type="FunFam" id="3.90.640.10:FF:000040">
    <property type="entry name" value="Actin-like protein ARP6"/>
    <property type="match status" value="1"/>
</dbReference>
<dbReference type="Gene3D" id="3.30.420.40">
    <property type="match status" value="2"/>
</dbReference>
<dbReference type="Gene3D" id="3.90.640.10">
    <property type="entry name" value="Actin, Chain A, domain 4"/>
    <property type="match status" value="1"/>
</dbReference>
<dbReference type="InterPro" id="IPR004000">
    <property type="entry name" value="Actin"/>
</dbReference>
<dbReference type="InterPro" id="IPR043129">
    <property type="entry name" value="ATPase_NBD"/>
</dbReference>
<dbReference type="PANTHER" id="PTHR11937">
    <property type="entry name" value="ACTIN"/>
    <property type="match status" value="1"/>
</dbReference>
<dbReference type="Pfam" id="PF00022">
    <property type="entry name" value="Actin"/>
    <property type="match status" value="1"/>
</dbReference>
<dbReference type="SMART" id="SM00268">
    <property type="entry name" value="ACTIN"/>
    <property type="match status" value="1"/>
</dbReference>
<dbReference type="SUPFAM" id="SSF53067">
    <property type="entry name" value="Actin-like ATPase domain"/>
    <property type="match status" value="2"/>
</dbReference>
<accession>Q6CJF4</accession>
<evidence type="ECO:0000250" key="1"/>
<evidence type="ECO:0000305" key="2"/>
<sequence>MSEPVLVIDNGSYEIKFGESGWDQPLRALNCLTKDKYSRFHLSNQTKKMRDISQALIRRPHELGQLVSWELESEVWDYCFYNEDDFHWNLTHDNDTKDHHLVVSETLMTIPELSKNMDQVIFEEYDFKSMFKGPVAQYIPFYQGQYQDDAMTAAEDKKTSSYKDFQLVIDSGFNCTWAVPIIKGVPYYKAIKKLDIGGRFLTGLLQETISFRHYNVMEETILVNNIKEQCTFVPPESYFSSFHNKMNTKVEYVLPDFQTSFLGYVKKPGKEKLTDDAQTLLLTDEVFSVPETFFHPEIAQILKPGIVETILECINMCPEVVRPLLVANIVCTGGNFNIPNFHERLQTELQRQCPIDWSCKVHSPQEKDKSLHGWESMKDFANSDQFRSARVTREEYLEHGLDWCTKNRFGYQQWL</sequence>
<name>ARP6_KLULA</name>
<comment type="function">
    <text evidence="1">Component of the SWR1 complex which mediates the ATP-dependent exchange of histone H2A for the H2A variant HZT1 leading to transcriptional regulation of selected genes by chromatin remodeling. Involved in chromosome stability (By similarity).</text>
</comment>
<comment type="subunit">
    <text evidence="1">Component of the SWR1 chromatin remodeling complex.</text>
</comment>
<comment type="subcellular location">
    <subcellularLocation>
        <location evidence="1">Cytoplasm</location>
    </subcellularLocation>
    <subcellularLocation>
        <location evidence="1">Cytoplasm</location>
        <location evidence="1">Cytoskeleton</location>
    </subcellularLocation>
    <subcellularLocation>
        <location evidence="1">Nucleus</location>
    </subcellularLocation>
</comment>
<comment type="similarity">
    <text evidence="2">Belongs to the actin family. ARP6 subfamily.</text>
</comment>
<feature type="chain" id="PRO_0000089117" description="Actin-like protein ARP6">
    <location>
        <begin position="1"/>
        <end position="415"/>
    </location>
</feature>
<gene>
    <name type="primary">ARP6</name>
    <name type="ordered locus">KLLA0F19063g</name>
</gene>